<accession>Q0I3L5</accession>
<organism>
    <name type="scientific">Histophilus somni (strain 129Pt)</name>
    <name type="common">Haemophilus somnus</name>
    <dbReference type="NCBI Taxonomy" id="205914"/>
    <lineage>
        <taxon>Bacteria</taxon>
        <taxon>Pseudomonadati</taxon>
        <taxon>Pseudomonadota</taxon>
        <taxon>Gammaproteobacteria</taxon>
        <taxon>Pasteurellales</taxon>
        <taxon>Pasteurellaceae</taxon>
        <taxon>Histophilus</taxon>
    </lineage>
</organism>
<proteinExistence type="inferred from homology"/>
<gene>
    <name evidence="1" type="primary">queF</name>
    <name type="ordered locus">HS_0851</name>
</gene>
<protein>
    <recommendedName>
        <fullName evidence="1">NADPH-dependent 7-cyano-7-deazaguanine reductase</fullName>
        <ecNumber evidence="1">1.7.1.13</ecNumber>
    </recommendedName>
    <alternativeName>
        <fullName evidence="1">7-cyano-7-carbaguanine reductase</fullName>
    </alternativeName>
    <alternativeName>
        <fullName evidence="1">NADPH-dependent nitrile oxidoreductase</fullName>
    </alternativeName>
    <alternativeName>
        <fullName evidence="1">PreQ(0) reductase</fullName>
    </alternativeName>
</protein>
<dbReference type="EC" id="1.7.1.13" evidence="1"/>
<dbReference type="EMBL" id="CP000436">
    <property type="protein sequence ID" value="ABI25126.1"/>
    <property type="molecule type" value="Genomic_DNA"/>
</dbReference>
<dbReference type="SMR" id="Q0I3L5"/>
<dbReference type="KEGG" id="hso:HS_0851"/>
<dbReference type="eggNOG" id="COG0780">
    <property type="taxonomic scope" value="Bacteria"/>
</dbReference>
<dbReference type="eggNOG" id="COG2904">
    <property type="taxonomic scope" value="Bacteria"/>
</dbReference>
<dbReference type="HOGENOM" id="CLU_054738_0_0_6"/>
<dbReference type="UniPathway" id="UPA00392"/>
<dbReference type="GO" id="GO:0005737">
    <property type="term" value="C:cytoplasm"/>
    <property type="evidence" value="ECO:0007669"/>
    <property type="project" value="UniProtKB-SubCell"/>
</dbReference>
<dbReference type="GO" id="GO:0033739">
    <property type="term" value="F:preQ1 synthase activity"/>
    <property type="evidence" value="ECO:0007669"/>
    <property type="project" value="UniProtKB-UniRule"/>
</dbReference>
<dbReference type="GO" id="GO:0008616">
    <property type="term" value="P:queuosine biosynthetic process"/>
    <property type="evidence" value="ECO:0007669"/>
    <property type="project" value="UniProtKB-UniRule"/>
</dbReference>
<dbReference type="GO" id="GO:0006400">
    <property type="term" value="P:tRNA modification"/>
    <property type="evidence" value="ECO:0007669"/>
    <property type="project" value="UniProtKB-UniRule"/>
</dbReference>
<dbReference type="Gene3D" id="3.30.1130.10">
    <property type="match status" value="2"/>
</dbReference>
<dbReference type="HAMAP" id="MF_00817">
    <property type="entry name" value="QueF_type2"/>
    <property type="match status" value="1"/>
</dbReference>
<dbReference type="InterPro" id="IPR043133">
    <property type="entry name" value="GTP-CH-I_C/QueF"/>
</dbReference>
<dbReference type="InterPro" id="IPR050084">
    <property type="entry name" value="NADPH_dep_7-cyano-7-deazaG_red"/>
</dbReference>
<dbReference type="InterPro" id="IPR029500">
    <property type="entry name" value="QueF"/>
</dbReference>
<dbReference type="InterPro" id="IPR029139">
    <property type="entry name" value="QueF_N"/>
</dbReference>
<dbReference type="InterPro" id="IPR016428">
    <property type="entry name" value="QueF_type2"/>
</dbReference>
<dbReference type="NCBIfam" id="TIGR03138">
    <property type="entry name" value="QueF"/>
    <property type="match status" value="1"/>
</dbReference>
<dbReference type="PANTHER" id="PTHR34354">
    <property type="entry name" value="NADPH-DEPENDENT 7-CYANO-7-DEAZAGUANINE REDUCTASE"/>
    <property type="match status" value="1"/>
</dbReference>
<dbReference type="PANTHER" id="PTHR34354:SF1">
    <property type="entry name" value="NADPH-DEPENDENT 7-CYANO-7-DEAZAGUANINE REDUCTASE"/>
    <property type="match status" value="1"/>
</dbReference>
<dbReference type="Pfam" id="PF14489">
    <property type="entry name" value="QueF"/>
    <property type="match status" value="1"/>
</dbReference>
<dbReference type="Pfam" id="PF14819">
    <property type="entry name" value="QueF_N"/>
    <property type="match status" value="1"/>
</dbReference>
<dbReference type="PIRSF" id="PIRSF004750">
    <property type="entry name" value="Nitrile_oxidored_YqcD_prd"/>
    <property type="match status" value="1"/>
</dbReference>
<dbReference type="SUPFAM" id="SSF55620">
    <property type="entry name" value="Tetrahydrobiopterin biosynthesis enzymes-like"/>
    <property type="match status" value="1"/>
</dbReference>
<sequence>MQYHDQSLQTLKLGKKTEYISTYDRTLLQAVPRKLNRDDLGISTKQPFSFGADIWTAYEISWLNLKGVPQVAIADVEIDYQSENLIESKSFKLYLNSFNQSQFENLQQVEQILQQDLIKCAKGQVKVRLNSLQNYAQQPIATLQGECIDEQDIEIRCYEFDPNLLENCTNKQWVEEKLVSHLLKSNCLITNQPDWGTVQIHYIGNQINREKLLRYLISFRQHNEFHEQCVERIFCDLMKFAQPEKLSVYARYTRRGGLDINPFRSNFEPIPLNQRLARQ</sequence>
<name>QUEF_HISS1</name>
<comment type="function">
    <text evidence="1">Catalyzes the NADPH-dependent reduction of 7-cyano-7-deazaguanine (preQ0) to 7-aminomethyl-7-deazaguanine (preQ1).</text>
</comment>
<comment type="catalytic activity">
    <reaction evidence="1">
        <text>7-aminomethyl-7-carbaguanine + 2 NADP(+) = 7-cyano-7-deazaguanine + 2 NADPH + 3 H(+)</text>
        <dbReference type="Rhea" id="RHEA:13409"/>
        <dbReference type="ChEBI" id="CHEBI:15378"/>
        <dbReference type="ChEBI" id="CHEBI:45075"/>
        <dbReference type="ChEBI" id="CHEBI:57783"/>
        <dbReference type="ChEBI" id="CHEBI:58349"/>
        <dbReference type="ChEBI" id="CHEBI:58703"/>
        <dbReference type="EC" id="1.7.1.13"/>
    </reaction>
</comment>
<comment type="pathway">
    <text evidence="1">tRNA modification; tRNA-queuosine biosynthesis.</text>
</comment>
<comment type="subunit">
    <text evidence="1">Homodimer.</text>
</comment>
<comment type="subcellular location">
    <subcellularLocation>
        <location evidence="1">Cytoplasm</location>
    </subcellularLocation>
</comment>
<comment type="similarity">
    <text evidence="1">Belongs to the GTP cyclohydrolase I family. QueF type 2 subfamily.</text>
</comment>
<feature type="chain" id="PRO_1000062345" description="NADPH-dependent 7-cyano-7-deazaguanine reductase">
    <location>
        <begin position="1"/>
        <end position="279"/>
    </location>
</feature>
<feature type="active site" description="Thioimide intermediate" evidence="1">
    <location>
        <position position="187"/>
    </location>
</feature>
<feature type="active site" description="Proton donor" evidence="1">
    <location>
        <position position="194"/>
    </location>
</feature>
<feature type="binding site" evidence="1">
    <location>
        <begin position="86"/>
        <end position="88"/>
    </location>
    <ligand>
        <name>substrate</name>
    </ligand>
</feature>
<feature type="binding site" evidence="1">
    <location>
        <begin position="88"/>
        <end position="89"/>
    </location>
    <ligand>
        <name>NADPH</name>
        <dbReference type="ChEBI" id="CHEBI:57783"/>
    </ligand>
</feature>
<feature type="binding site" evidence="1">
    <location>
        <begin position="226"/>
        <end position="227"/>
    </location>
    <ligand>
        <name>substrate</name>
    </ligand>
</feature>
<feature type="binding site" evidence="1">
    <location>
        <begin position="255"/>
        <end position="256"/>
    </location>
    <ligand>
        <name>NADPH</name>
        <dbReference type="ChEBI" id="CHEBI:57783"/>
    </ligand>
</feature>
<keyword id="KW-0963">Cytoplasm</keyword>
<keyword id="KW-0521">NADP</keyword>
<keyword id="KW-0560">Oxidoreductase</keyword>
<keyword id="KW-0671">Queuosine biosynthesis</keyword>
<evidence type="ECO:0000255" key="1">
    <source>
        <dbReference type="HAMAP-Rule" id="MF_00817"/>
    </source>
</evidence>
<reference key="1">
    <citation type="journal article" date="2007" name="J. Bacteriol.">
        <title>Complete genome sequence of Haemophilus somnus (Histophilus somni) strain 129Pt and comparison to Haemophilus ducreyi 35000HP and Haemophilus influenzae Rd.</title>
        <authorList>
            <person name="Challacombe J.F."/>
            <person name="Duncan A.J."/>
            <person name="Brettin T.S."/>
            <person name="Bruce D."/>
            <person name="Chertkov O."/>
            <person name="Detter J.C."/>
            <person name="Han C.S."/>
            <person name="Misra M."/>
            <person name="Richardson P."/>
            <person name="Tapia R."/>
            <person name="Thayer N."/>
            <person name="Xie G."/>
            <person name="Inzana T.J."/>
        </authorList>
    </citation>
    <scope>NUCLEOTIDE SEQUENCE [LARGE SCALE GENOMIC DNA]</scope>
    <source>
        <strain>129Pt</strain>
    </source>
</reference>